<dbReference type="EMBL" id="Z21487">
    <property type="protein sequence ID" value="CAA79678.1"/>
    <property type="molecule type" value="Genomic_DNA"/>
</dbReference>
<dbReference type="EMBL" id="Z36061">
    <property type="protein sequence ID" value="CAA85154.1"/>
    <property type="molecule type" value="Genomic_DNA"/>
</dbReference>
<dbReference type="EMBL" id="AY557871">
    <property type="protein sequence ID" value="AAS56197.1"/>
    <property type="molecule type" value="Genomic_DNA"/>
</dbReference>
<dbReference type="EMBL" id="BK006936">
    <property type="protein sequence ID" value="DAA07306.1"/>
    <property type="molecule type" value="Genomic_DNA"/>
</dbReference>
<dbReference type="PIR" id="S36081">
    <property type="entry name" value="S36081"/>
</dbReference>
<dbReference type="RefSeq" id="NP_009751.1">
    <property type="nucleotide sequence ID" value="NM_001178540.1"/>
</dbReference>
<dbReference type="SMR" id="P38127"/>
<dbReference type="BioGRID" id="32889">
    <property type="interactions" value="37"/>
</dbReference>
<dbReference type="DIP" id="DIP-4933N"/>
<dbReference type="FunCoup" id="P38127">
    <property type="interactions" value="533"/>
</dbReference>
<dbReference type="IntAct" id="P38127">
    <property type="interactions" value="2"/>
</dbReference>
<dbReference type="STRING" id="4932.YBR192W"/>
<dbReference type="TCDB" id="2.A.29.10.4">
    <property type="family name" value="the mitochondrial carrier (mc) family"/>
</dbReference>
<dbReference type="PaxDb" id="4932-YBR192W"/>
<dbReference type="PeptideAtlas" id="P38127"/>
<dbReference type="EnsemblFungi" id="YBR192W_mRNA">
    <property type="protein sequence ID" value="YBR192W"/>
    <property type="gene ID" value="YBR192W"/>
</dbReference>
<dbReference type="GeneID" id="852491"/>
<dbReference type="KEGG" id="sce:YBR192W"/>
<dbReference type="AGR" id="SGD:S000000396"/>
<dbReference type="SGD" id="S000000396">
    <property type="gene designation" value="RIM2"/>
</dbReference>
<dbReference type="VEuPathDB" id="FungiDB:YBR192W"/>
<dbReference type="eggNOG" id="KOG0757">
    <property type="taxonomic scope" value="Eukaryota"/>
</dbReference>
<dbReference type="GeneTree" id="ENSGT00940000168859"/>
<dbReference type="HOGENOM" id="CLU_015166_6_0_1"/>
<dbReference type="InParanoid" id="P38127"/>
<dbReference type="OMA" id="WVMYEQM"/>
<dbReference type="OrthoDB" id="269120at2759"/>
<dbReference type="BioCyc" id="YEAST:G3O-29134-MONOMER"/>
<dbReference type="BioGRID-ORCS" id="852491">
    <property type="hits" value="1 hit in 10 CRISPR screens"/>
</dbReference>
<dbReference type="PRO" id="PR:P38127"/>
<dbReference type="Proteomes" id="UP000002311">
    <property type="component" value="Chromosome II"/>
</dbReference>
<dbReference type="RNAct" id="P38127">
    <property type="molecule type" value="protein"/>
</dbReference>
<dbReference type="GO" id="GO:0005743">
    <property type="term" value="C:mitochondrial inner membrane"/>
    <property type="evidence" value="ECO:0007669"/>
    <property type="project" value="UniProtKB-SubCell"/>
</dbReference>
<dbReference type="GO" id="GO:0005739">
    <property type="term" value="C:mitochondrion"/>
    <property type="evidence" value="ECO:0000314"/>
    <property type="project" value="SGD"/>
</dbReference>
<dbReference type="GO" id="GO:0015218">
    <property type="term" value="F:pyrimidine nucleotide transmembrane transporter activity"/>
    <property type="evidence" value="ECO:0000314"/>
    <property type="project" value="SGD"/>
</dbReference>
<dbReference type="GO" id="GO:0030001">
    <property type="term" value="P:metal ion transport"/>
    <property type="evidence" value="ECO:0000314"/>
    <property type="project" value="SGD"/>
</dbReference>
<dbReference type="GO" id="GO:0000002">
    <property type="term" value="P:mitochondrial genome maintenance"/>
    <property type="evidence" value="ECO:0000315"/>
    <property type="project" value="SGD"/>
</dbReference>
<dbReference type="GO" id="GO:1990519">
    <property type="term" value="P:pyrimidine nucleotide import into mitochondrion"/>
    <property type="evidence" value="ECO:0000318"/>
    <property type="project" value="GO_Central"/>
</dbReference>
<dbReference type="GO" id="GO:0006864">
    <property type="term" value="P:pyrimidine nucleotide transport"/>
    <property type="evidence" value="ECO:0000314"/>
    <property type="project" value="SGD"/>
</dbReference>
<dbReference type="GO" id="GO:0051881">
    <property type="term" value="P:regulation of mitochondrial membrane potential"/>
    <property type="evidence" value="ECO:0000314"/>
    <property type="project" value="UniProtKB"/>
</dbReference>
<dbReference type="GO" id="GO:0055085">
    <property type="term" value="P:transmembrane transport"/>
    <property type="evidence" value="ECO:0000314"/>
    <property type="project" value="SGD"/>
</dbReference>
<dbReference type="FunFam" id="1.50.40.10:FF:000079">
    <property type="entry name" value="Mitochondrial carrier protein RIM2"/>
    <property type="match status" value="1"/>
</dbReference>
<dbReference type="FunFam" id="1.50.40.10:FF:000088">
    <property type="entry name" value="Mitochondrial carrier protein RIM2"/>
    <property type="match status" value="1"/>
</dbReference>
<dbReference type="Gene3D" id="1.50.40.10">
    <property type="entry name" value="Mitochondrial carrier domain"/>
    <property type="match status" value="2"/>
</dbReference>
<dbReference type="InterPro" id="IPR002067">
    <property type="entry name" value="Mit_carrier"/>
</dbReference>
<dbReference type="InterPro" id="IPR018108">
    <property type="entry name" value="Mitochondrial_sb/sol_carrier"/>
</dbReference>
<dbReference type="InterPro" id="IPR023395">
    <property type="entry name" value="Mt_carrier_dom_sf"/>
</dbReference>
<dbReference type="InterPro" id="IPR049562">
    <property type="entry name" value="SLC25A33/36-like"/>
</dbReference>
<dbReference type="PANTHER" id="PTHR45829">
    <property type="entry name" value="MITOCHONDRIAL CARRIER PROTEIN RIM2"/>
    <property type="match status" value="1"/>
</dbReference>
<dbReference type="PANTHER" id="PTHR45829:SF4">
    <property type="entry name" value="MITOCHONDRIAL CARRIER PROTEIN RIM2"/>
    <property type="match status" value="1"/>
</dbReference>
<dbReference type="Pfam" id="PF00153">
    <property type="entry name" value="Mito_carr"/>
    <property type="match status" value="3"/>
</dbReference>
<dbReference type="PRINTS" id="PR00926">
    <property type="entry name" value="MITOCARRIER"/>
</dbReference>
<dbReference type="SUPFAM" id="SSF103506">
    <property type="entry name" value="Mitochondrial carrier"/>
    <property type="match status" value="1"/>
</dbReference>
<dbReference type="PROSITE" id="PS50920">
    <property type="entry name" value="SOLCAR"/>
    <property type="match status" value="3"/>
</dbReference>
<comment type="function">
    <text evidence="3 5 6">Mitochondrial transporter that imports/exports pyrimidine nucleotides into and from mitochondria. Selectively transports uridine, thymidine, and cytosine (deoxy)nucleoside di- and triphosphates by an antiport mechanism (PubMed:16194150). Also transports, with lower efficiency, uridine, thymidine, and cytosine (deoxy)nucleoside monophosphates as well as guanosine (deoxy)nucleoside di- and triphosphate (PubMed:16194150). May import (deoxy)nucleoside triphosphates in exchange for intramitochondrial (deoxy)nucleoside monophosphates, thus providing precursors necessary for de novo synthesis of mitochondrial DNA and RNA while exporting products of their catabolism (PubMed:16194150). Mediates the transport of iron and other divalent metal ions like copper and zinc across the mitochondrial inner membrane in a pyrimidine nucleotide-dependent fashion. Catalyzes the co-import of pyrimidine nucleotides and divalent metal ions including ferrous iron (PubMed:23800229). Participates in mitochondrial genome maintenance, regulation of mitochondrial membrane potential and mitochondrial respiration (PubMed:25320081).</text>
</comment>
<comment type="catalytic activity">
    <reaction evidence="3">
        <text>5-methyl-UTP(out) + UTP(in) = 5-methyl-UTP(in) + UTP(out)</text>
        <dbReference type="Rhea" id="RHEA:73523"/>
        <dbReference type="ChEBI" id="CHEBI:46398"/>
        <dbReference type="ChEBI" id="CHEBI:63527"/>
    </reaction>
</comment>
<comment type="biophysicochemical properties">
    <kinetics>
        <KM evidence="3">404 mM for UTP (at 25 degrees Celsius)</KM>
        <KM evidence="3">435 mM for CTP (at 25 degrees Celsius)</KM>
        <KM evidence="3">207 uM for TTP (at 25 degrees Celsius)</KM>
        <Vmax evidence="3">150.0 umol/min/g enzyme (at 25 degrees Celsius)</Vmax>
    </kinetics>
</comment>
<comment type="subcellular location">
    <subcellularLocation>
        <location evidence="4 7">Mitochondrion inner membrane</location>
        <topology evidence="1">Multi-pass membrane protein</topology>
    </subcellularLocation>
</comment>
<comment type="disruption phenotype">
    <text evidence="7">Causes total loss of mtDNA and lack of growth on non-fermentative carbon sources.</text>
</comment>
<comment type="similarity">
    <text evidence="8">Belongs to the mitochondrial carrier (TC 2.A.29) family.</text>
</comment>
<reference key="1">
    <citation type="journal article" date="1993" name="Yeast">
        <title>RIM2, MSI1 and PGI1 are located within an 8 kb segment of Saccharomyces cerevisiae chromosome II, which also contains the putative ribosomal gene L21 and a new putative essential gene with a leucine zipper motif.</title>
        <authorList>
            <person name="Demolis N."/>
            <person name="Mallet L."/>
            <person name="Bussereau F."/>
            <person name="Jacquet M."/>
        </authorList>
    </citation>
    <scope>NUCLEOTIDE SEQUENCE [GENOMIC DNA]</scope>
    <source>
        <strain>ATCC 204508 / S288c</strain>
    </source>
</reference>
<reference key="2">
    <citation type="journal article" date="1994" name="EMBO J.">
        <title>Complete DNA sequence of yeast chromosome II.</title>
        <authorList>
            <person name="Feldmann H."/>
            <person name="Aigle M."/>
            <person name="Aljinovic G."/>
            <person name="Andre B."/>
            <person name="Baclet M.C."/>
            <person name="Barthe C."/>
            <person name="Baur A."/>
            <person name="Becam A.-M."/>
            <person name="Biteau N."/>
            <person name="Boles E."/>
            <person name="Brandt T."/>
            <person name="Brendel M."/>
            <person name="Brueckner M."/>
            <person name="Bussereau F."/>
            <person name="Christiansen C."/>
            <person name="Contreras R."/>
            <person name="Crouzet M."/>
            <person name="Cziepluch C."/>
            <person name="Demolis N."/>
            <person name="Delaveau T."/>
            <person name="Doignon F."/>
            <person name="Domdey H."/>
            <person name="Duesterhus S."/>
            <person name="Dubois E."/>
            <person name="Dujon B."/>
            <person name="El Bakkoury M."/>
            <person name="Entian K.-D."/>
            <person name="Feuermann M."/>
            <person name="Fiers W."/>
            <person name="Fobo G.M."/>
            <person name="Fritz C."/>
            <person name="Gassenhuber J."/>
            <person name="Glansdorff N."/>
            <person name="Goffeau A."/>
            <person name="Grivell L.A."/>
            <person name="de Haan M."/>
            <person name="Hein C."/>
            <person name="Herbert C.J."/>
            <person name="Hollenberg C.P."/>
            <person name="Holmstroem K."/>
            <person name="Jacq C."/>
            <person name="Jacquet M."/>
            <person name="Jauniaux J.-C."/>
            <person name="Jonniaux J.-L."/>
            <person name="Kallesoee T."/>
            <person name="Kiesau P."/>
            <person name="Kirchrath L."/>
            <person name="Koetter P."/>
            <person name="Korol S."/>
            <person name="Liebl S."/>
            <person name="Logghe M."/>
            <person name="Lohan A.J.E."/>
            <person name="Louis E.J."/>
            <person name="Li Z.Y."/>
            <person name="Maat M.J."/>
            <person name="Mallet L."/>
            <person name="Mannhaupt G."/>
            <person name="Messenguy F."/>
            <person name="Miosga T."/>
            <person name="Molemans F."/>
            <person name="Mueller S."/>
            <person name="Nasr F."/>
            <person name="Obermaier B."/>
            <person name="Perea J."/>
            <person name="Pierard A."/>
            <person name="Piravandi E."/>
            <person name="Pohl F.M."/>
            <person name="Pohl T.M."/>
            <person name="Potier S."/>
            <person name="Proft M."/>
            <person name="Purnelle B."/>
            <person name="Ramezani Rad M."/>
            <person name="Rieger M."/>
            <person name="Rose M."/>
            <person name="Schaaff-Gerstenschlaeger I."/>
            <person name="Scherens B."/>
            <person name="Schwarzlose C."/>
            <person name="Skala J."/>
            <person name="Slonimski P.P."/>
            <person name="Smits P.H.M."/>
            <person name="Souciet J.-L."/>
            <person name="Steensma H.Y."/>
            <person name="Stucka R."/>
            <person name="Urrestarazu L.A."/>
            <person name="van der Aart Q.J.M."/>
            <person name="Van Dyck L."/>
            <person name="Vassarotti A."/>
            <person name="Vetter I."/>
            <person name="Vierendeels F."/>
            <person name="Vissers S."/>
            <person name="Wagner G."/>
            <person name="de Wergifosse P."/>
            <person name="Wolfe K.H."/>
            <person name="Zagulski M."/>
            <person name="Zimmermann F.K."/>
            <person name="Mewes H.-W."/>
            <person name="Kleine K."/>
        </authorList>
    </citation>
    <scope>NUCLEOTIDE SEQUENCE [LARGE SCALE GENOMIC DNA]</scope>
    <source>
        <strain>ATCC 204508 / S288c</strain>
    </source>
</reference>
<reference key="3">
    <citation type="journal article" date="2014" name="G3 (Bethesda)">
        <title>The reference genome sequence of Saccharomyces cerevisiae: Then and now.</title>
        <authorList>
            <person name="Engel S.R."/>
            <person name="Dietrich F.S."/>
            <person name="Fisk D.G."/>
            <person name="Binkley G."/>
            <person name="Balakrishnan R."/>
            <person name="Costanzo M.C."/>
            <person name="Dwight S.S."/>
            <person name="Hitz B.C."/>
            <person name="Karra K."/>
            <person name="Nash R.S."/>
            <person name="Weng S."/>
            <person name="Wong E.D."/>
            <person name="Lloyd P."/>
            <person name="Skrzypek M.S."/>
            <person name="Miyasato S.R."/>
            <person name="Simison M."/>
            <person name="Cherry J.M."/>
        </authorList>
    </citation>
    <scope>GENOME REANNOTATION</scope>
    <source>
        <strain>ATCC 204508 / S288c</strain>
    </source>
</reference>
<reference key="4">
    <citation type="journal article" date="2007" name="Genome Res.">
        <title>Approaching a complete repository of sequence-verified protein-encoding clones for Saccharomyces cerevisiae.</title>
        <authorList>
            <person name="Hu Y."/>
            <person name="Rolfs A."/>
            <person name="Bhullar B."/>
            <person name="Murthy T.V.S."/>
            <person name="Zhu C."/>
            <person name="Berger M.F."/>
            <person name="Camargo A.A."/>
            <person name="Kelley F."/>
            <person name="McCarron S."/>
            <person name="Jepson D."/>
            <person name="Richardson A."/>
            <person name="Raphael J."/>
            <person name="Moreira D."/>
            <person name="Taycher E."/>
            <person name="Zuo D."/>
            <person name="Mohr S."/>
            <person name="Kane M.F."/>
            <person name="Williamson J."/>
            <person name="Simpson A.J.G."/>
            <person name="Bulyk M.L."/>
            <person name="Harlow E."/>
            <person name="Marsischky G."/>
            <person name="Kolodner R.D."/>
            <person name="LaBaer J."/>
        </authorList>
    </citation>
    <scope>NUCLEOTIDE SEQUENCE [GENOMIC DNA]</scope>
    <source>
        <strain>ATCC 204508 / S288c</strain>
    </source>
</reference>
<reference key="5">
    <citation type="journal article" date="1995" name="Mol. Gen. Genet.">
        <title>Overexpression of a novel member of the mitochondrial carrier family rescues defects in both DNA and RNA metabolism in yeast mitochondria.</title>
        <authorList>
            <person name="Van Dyck E."/>
            <person name="Jank B."/>
            <person name="Ragnini A."/>
            <person name="Schweyen R.J."/>
            <person name="Duyckaerts C."/>
            <person name="Sluse F."/>
            <person name="Foury F."/>
        </authorList>
    </citation>
    <scope>SUBCELLULAR LOCATION</scope>
    <scope>DISRUPTION PHENOTYPE</scope>
</reference>
<reference key="6">
    <citation type="journal article" date="2006" name="Biochem. J.">
        <title>Identification of a mitochondrial transporter for pyrimidine nucleotides in Saccharomyces cerevisiae: bacterial expression, reconstitution and functional characterization.</title>
        <authorList>
            <person name="Marobbio C.M."/>
            <person name="Di Noia M.A."/>
            <person name="Palmieri F."/>
        </authorList>
    </citation>
    <scope>FUNCTION</scope>
    <scope>CATALYTIC ACTIVITY</scope>
    <scope>BIOPHYSICOCHEMICAL PROPERTIES</scope>
</reference>
<reference key="7">
    <citation type="journal article" date="2006" name="J. Proteome Res.">
        <title>Toward the complete yeast mitochondrial proteome: multidimensional separation techniques for mitochondrial proteomics.</title>
        <authorList>
            <person name="Reinders J."/>
            <person name="Zahedi R.P."/>
            <person name="Pfanner N."/>
            <person name="Meisinger C."/>
            <person name="Sickmann A."/>
        </authorList>
    </citation>
    <scope>SUBCELLULAR LOCATION [LARGE SCALE ANALYSIS]</scope>
    <scope>IDENTIFICATION BY MASS SPECTROMETRY</scope>
</reference>
<reference key="8">
    <citation type="journal article" date="2013" name="Biochem. J.">
        <title>The mitochondrial carrier Rim2 co-imports pyrimidine nucleotides and iron.</title>
        <authorList>
            <person name="Froschauer E.M."/>
            <person name="Rietzschel N."/>
            <person name="Hassler M.R."/>
            <person name="Binder M."/>
            <person name="Schweyen R.J."/>
            <person name="Lill R."/>
            <person name="Muehlenhoff U."/>
            <person name="Wiesenberger G."/>
        </authorList>
    </citation>
    <scope>FUNCTION</scope>
    <scope>MUTAGENESIS OF 245-GLY-SER-246</scope>
</reference>
<reference key="9">
    <citation type="journal article" date="2014" name="J. Biol. Chem.">
        <title>The human SLC25A33 and SLC25A36 genes of solute carrier family 25 encode two mitochondrial pyrimidine nucleotide transporters.</title>
        <authorList>
            <person name="Di Noia M.A."/>
            <person name="Todisco S."/>
            <person name="Cirigliano A."/>
            <person name="Rinaldi T."/>
            <person name="Agrimi G."/>
            <person name="Iacobazzi V."/>
            <person name="Palmieri F."/>
        </authorList>
    </citation>
    <scope>FUNCTION</scope>
</reference>
<accession>P38127</accession>
<accession>D6VQI6</accession>
<keyword id="KW-0472">Membrane</keyword>
<keyword id="KW-0496">Mitochondrion</keyword>
<keyword id="KW-0999">Mitochondrion inner membrane</keyword>
<keyword id="KW-1185">Reference proteome</keyword>
<keyword id="KW-0677">Repeat</keyword>
<keyword id="KW-0812">Transmembrane</keyword>
<keyword id="KW-1133">Transmembrane helix</keyword>
<keyword id="KW-0813">Transport</keyword>
<proteinExistence type="evidence at protein level"/>
<protein>
    <recommendedName>
        <fullName evidence="8">Mitochondrial pyrimidine nucleotide transporter RIM2</fullName>
    </recommendedName>
    <alternativeName>
        <fullName>Replication in mitochondria protein 2</fullName>
    </alternativeName>
</protein>
<evidence type="ECO:0000255" key="1"/>
<evidence type="ECO:0000255" key="2">
    <source>
        <dbReference type="PROSITE-ProRule" id="PRU00282"/>
    </source>
</evidence>
<evidence type="ECO:0000269" key="3">
    <source>
    </source>
</evidence>
<evidence type="ECO:0000269" key="4">
    <source>
    </source>
</evidence>
<evidence type="ECO:0000269" key="5">
    <source>
    </source>
</evidence>
<evidence type="ECO:0000269" key="6">
    <source>
    </source>
</evidence>
<evidence type="ECO:0000269" key="7">
    <source>
    </source>
</evidence>
<evidence type="ECO:0000305" key="8"/>
<gene>
    <name type="primary">RIM2</name>
    <name type="ordered locus">YBR192W</name>
    <name type="ORF">YBR1402</name>
</gene>
<name>RIM2_YEAST</name>
<organism>
    <name type="scientific">Saccharomyces cerevisiae (strain ATCC 204508 / S288c)</name>
    <name type="common">Baker's yeast</name>
    <dbReference type="NCBI Taxonomy" id="559292"/>
    <lineage>
        <taxon>Eukaryota</taxon>
        <taxon>Fungi</taxon>
        <taxon>Dikarya</taxon>
        <taxon>Ascomycota</taxon>
        <taxon>Saccharomycotina</taxon>
        <taxon>Saccharomycetes</taxon>
        <taxon>Saccharomycetales</taxon>
        <taxon>Saccharomycetaceae</taxon>
        <taxon>Saccharomyces</taxon>
    </lineage>
</organism>
<feature type="chain" id="PRO_0000090690" description="Mitochondrial pyrimidine nucleotide transporter RIM2">
    <location>
        <begin position="1"/>
        <end position="377"/>
    </location>
</feature>
<feature type="transmembrane region" description="Helical; Name=1" evidence="1">
    <location>
        <begin position="53"/>
        <end position="73"/>
    </location>
</feature>
<feature type="transmembrane region" description="Helical; Name=2" evidence="1">
    <location>
        <begin position="131"/>
        <end position="151"/>
    </location>
</feature>
<feature type="transmembrane region" description="Helical; Name=3" evidence="1">
    <location>
        <begin position="179"/>
        <end position="199"/>
    </location>
</feature>
<feature type="transmembrane region" description="Helical; Name=4" evidence="1">
    <location>
        <begin position="238"/>
        <end position="258"/>
    </location>
</feature>
<feature type="transmembrane region" description="Helical; Name=5" evidence="1">
    <location>
        <begin position="286"/>
        <end position="306"/>
    </location>
</feature>
<feature type="transmembrane region" description="Helical; Name=6" evidence="1">
    <location>
        <begin position="347"/>
        <end position="368"/>
    </location>
</feature>
<feature type="repeat" description="Solcar 1" evidence="2">
    <location>
        <begin position="50"/>
        <end position="163"/>
    </location>
</feature>
<feature type="repeat" description="Solcar 2" evidence="2">
    <location>
        <begin position="173"/>
        <end position="262"/>
    </location>
</feature>
<feature type="repeat" description="Solcar 3" evidence="2">
    <location>
        <begin position="286"/>
        <end position="375"/>
    </location>
</feature>
<feature type="mutagenesis site" description="In RIM2-1; inactivates pyrimidine nucleotide transport and iron, copper and zinc ion transport across the mitochondrial inner membrane." evidence="5">
    <original>GS</original>
    <variation>YA</variation>
    <location>
        <begin position="245"/>
        <end position="246"/>
    </location>
</feature>
<sequence length="377" mass="42102">MPKKSIEEWEEDAIESVPYLASDEKGSNYKEATQIPLNLKQSEIENHPTVKPWVHFVAGGIGGMAGAVVTCPFDLVKTRLQSDIFLKAYKSQAVNISKGSTRPKSINYVIQAGTHFKETLGIIGNVYKQEGFRSLFKGLGPNLVGVIPARSINFFTYGTTKDMYAKAFNNGQETPMIHLMAAATAGWATATATNPIWLIKTRVQLDKAGKTSVRQYKNSWDCLKSVIRNEGFTGLYKGLSASYLGSVEGILQWLLYEQMKRLIKERSIEKFGYQAEGTKSTSEKVKEWCQRSGSAGLAKFVASIATYPHEVVRTRLRQTPKENGKRKYTGLVQSFKVIIKEEGLFSMYSGLTPHLMRTVPNSIIMFGTWEIVIRLLS</sequence>